<keyword id="KW-0158">Chromosome</keyword>
<keyword id="KW-0217">Developmental protein</keyword>
<keyword id="KW-0221">Differentiation</keyword>
<keyword id="KW-0226">DNA condensation</keyword>
<keyword id="KW-0238">DNA-binding</keyword>
<keyword id="KW-0544">Nucleosome core</keyword>
<keyword id="KW-0539">Nucleus</keyword>
<keyword id="KW-0744">Spermatogenesis</keyword>
<comment type="function">
    <text>Protamines substitute for histones in the chromatin of sperm during the haploid phase of spermatogenesis. They compact sperm DNA into a highly condensed, stable and inactive complex.</text>
</comment>
<comment type="subcellular location">
    <subcellularLocation>
        <location>Nucleus</location>
    </subcellularLocation>
    <subcellularLocation>
        <location>Chromosome</location>
    </subcellularLocation>
</comment>
<comment type="tissue specificity">
    <text>Testis.</text>
</comment>
<comment type="similarity">
    <text evidence="1">Belongs to the protamine P1 family.</text>
</comment>
<feature type="chain" id="PRO_0000191516" description="Sperm protamine P1">
    <location>
        <begin position="1"/>
        <end position="47"/>
    </location>
</feature>
<gene>
    <name type="primary">PRM1</name>
    <name type="synonym">P1</name>
</gene>
<protein>
    <recommendedName>
        <fullName>Sperm protamine P1</fullName>
    </recommendedName>
    <alternativeName>
        <fullName>Cysteine-rich protamine</fullName>
    </alternativeName>
</protein>
<organism>
    <name type="scientific">Orcinus orca</name>
    <name type="common">Killer whale</name>
    <name type="synonym">Delphinus orca</name>
    <dbReference type="NCBI Taxonomy" id="9733"/>
    <lineage>
        <taxon>Eukaryota</taxon>
        <taxon>Metazoa</taxon>
        <taxon>Chordata</taxon>
        <taxon>Craniata</taxon>
        <taxon>Vertebrata</taxon>
        <taxon>Euteleostomi</taxon>
        <taxon>Mammalia</taxon>
        <taxon>Eutheria</taxon>
        <taxon>Laurasiatheria</taxon>
        <taxon>Artiodactyla</taxon>
        <taxon>Whippomorpha</taxon>
        <taxon>Cetacea</taxon>
        <taxon>Odontoceti</taxon>
        <taxon>Delphinidae</taxon>
        <taxon>Orcinus</taxon>
    </lineage>
</organism>
<reference key="1">
    <citation type="journal article" date="1992" name="Nucleic Acids Res.">
        <title>Nucleotide sequence of the protamine P1 gene from the whale Orcinus orca predicts a unique N-terminal amino-acid motif.</title>
        <authorList>
            <person name="Adroer R."/>
            <person name="Queralt R."/>
            <person name="Ballabriga J."/>
            <person name="Oliva R."/>
        </authorList>
    </citation>
    <scope>NUCLEOTIDE SEQUENCE [GENOMIC DNA]</scope>
</reference>
<dbReference type="EMBL" id="Z11496">
    <property type="protein sequence ID" value="CAA77572.1"/>
    <property type="molecule type" value="Genomic_DNA"/>
</dbReference>
<dbReference type="PIR" id="S22828">
    <property type="entry name" value="S22828"/>
</dbReference>
<dbReference type="GO" id="GO:0000786">
    <property type="term" value="C:nucleosome"/>
    <property type="evidence" value="ECO:0007669"/>
    <property type="project" value="UniProtKB-KW"/>
</dbReference>
<dbReference type="GO" id="GO:0005634">
    <property type="term" value="C:nucleus"/>
    <property type="evidence" value="ECO:0007669"/>
    <property type="project" value="UniProtKB-SubCell"/>
</dbReference>
<dbReference type="GO" id="GO:0003677">
    <property type="term" value="F:DNA binding"/>
    <property type="evidence" value="ECO:0007669"/>
    <property type="project" value="UniProtKB-KW"/>
</dbReference>
<dbReference type="GO" id="GO:0030261">
    <property type="term" value="P:chromosome condensation"/>
    <property type="evidence" value="ECO:0007669"/>
    <property type="project" value="UniProtKB-KW"/>
</dbReference>
<dbReference type="GO" id="GO:0035092">
    <property type="term" value="P:sperm DNA condensation"/>
    <property type="evidence" value="ECO:0007669"/>
    <property type="project" value="InterPro"/>
</dbReference>
<dbReference type="InterPro" id="IPR000221">
    <property type="entry name" value="Protamine_P1"/>
</dbReference>
<dbReference type="Pfam" id="PF00260">
    <property type="entry name" value="Protamine_P1"/>
    <property type="match status" value="1"/>
</dbReference>
<dbReference type="PROSITE" id="PS00048">
    <property type="entry name" value="PROTAMINE_P1"/>
    <property type="match status" value="1"/>
</dbReference>
<accession>P24713</accession>
<proteinExistence type="evidence at transcript level"/>
<sequence length="47" mass="6029">MARNRCRSPSQSRCRRPRRRCRRRIRCCRRQRRVCCRRYTTTRCARQ</sequence>
<name>HSP1_ORCOR</name>
<evidence type="ECO:0000305" key="1"/>